<sequence>MAFPELLDRVGGRGRFQLLQAVALVTPILWVTTQNMLENFSAAVPHHRCWVPLLDNSTSQASIPGDFGRDVLLAVSIPPGPDQRPHQCLRFRQPQWQLIESNTTATNWSDADTEPCEDGWVYDHSTFRSTIVTTWDLVCDSQALRPMAQSIFLAGILVGAAVCGHASDRFGRRRVLTWSYLLVSVSGTIAALMPTFPLYCLFRFLVASAVAGVMMNTASLLMEWTSAQAGPLMMTLNALGFSFGQVLTGSVAYGVRSWRMLQLAVSAPFFLFFVYSWWLPESARWLITVGRLDQSLRELQRVAAVNRRKAEADTLTVEVLRSAMQEEPNGNQAGARLGTLLHTPGLRLRTFISMLCWFAFGFTFYGLALDLQALGSNIFLLQALIGIVDLPVKMGSLLLLSRLGRRLCQASSLVLPGLCILANILVPREMGILRSSLAVLGLGSLGAAFTCVTIFSSELFPTVIRMTAVGLGQVAARGGAMLGPLVRLLGVYGSWLPLLVYGVVPVLSGLAALLLPETKNLPLPDTIQDIQKQSVKKVTHDIAGGSVLKSARL</sequence>
<reference key="1">
    <citation type="journal article" date="2004" name="Genome Res.">
        <title>The status, quality, and expansion of the NIH full-length cDNA project: the Mammalian Gene Collection (MGC).</title>
        <authorList>
            <consortium name="The MGC Project Team"/>
        </authorList>
    </citation>
    <scope>NUCLEOTIDE SEQUENCE [LARGE SCALE MRNA]</scope>
    <source>
        <tissue>Kidney</tissue>
    </source>
</reference>
<reference key="2">
    <citation type="journal article" date="2011" name="Biochim. Biophys. Acta">
        <title>Identification and functional characterization of uric acid transporter Urat1 (Slc22a12) in rats.</title>
        <authorList>
            <person name="Sato M."/>
            <person name="Wakayama T."/>
            <person name="Mamada H."/>
            <person name="Shirasaka Y."/>
            <person name="Nakanishi T."/>
            <person name="Tamai I."/>
        </authorList>
    </citation>
    <scope>FUNCTION</scope>
    <scope>TRANSPORTER ACTIVITY</scope>
    <scope>BIOPHYSICOCHEMICAL PROPERTIES</scope>
    <scope>SUBCELLULAR LOCATION</scope>
    <scope>TISSUE SPECIFICITY</scope>
</reference>
<protein>
    <recommendedName>
        <fullName evidence="5">Solute carrier family 22 member 12</fullName>
    </recommendedName>
    <alternativeName>
        <fullName evidence="5">Urate anion exchanger 1</fullName>
        <shortName evidence="5">URAT1</shortName>
    </alternativeName>
    <alternativeName>
        <fullName evidence="5">Urate:anion antiporter SLC22A12</fullName>
    </alternativeName>
</protein>
<comment type="function">
    <text evidence="2 4">Electroneutral antiporter that translocates urate across the apical membrane of proximal tubular cells in exchange for monovalent organic or inorganic anions (PubMed:21074513). Involved in renal reabsorption of urate and helps maintaining blood levels of uric acid (PubMed:21074513). Mediates urate uptake by an exchange with organic anions such as (S)-lactate and nicotinate, and inorganic anion Cl(-) (PubMed:21074513). Other inorganic anions such as Br(-), I(-) and NO3(-) may also act as counteranions that exchange for urate (By similarity). Also mediates orotate tubular uptake coupled with nicotinate efflux and to a lesser extent with lactate efflux, therefore displaying a potential role in orotate renal reabsorption. Orotate transport is Cl(-)-dependent (By similarity).</text>
</comment>
<comment type="catalytic activity">
    <reaction evidence="4">
        <text>urate(out) + (S)-lactate(in) = urate(in) + (S)-lactate(out)</text>
        <dbReference type="Rhea" id="RHEA:72003"/>
        <dbReference type="ChEBI" id="CHEBI:16651"/>
        <dbReference type="ChEBI" id="CHEBI:17775"/>
    </reaction>
</comment>
<comment type="catalytic activity">
    <reaction evidence="4">
        <text>nicotinate(in) + urate(out) = nicotinate(out) + urate(in)</text>
        <dbReference type="Rhea" id="RHEA:72023"/>
        <dbReference type="ChEBI" id="CHEBI:17775"/>
        <dbReference type="ChEBI" id="CHEBI:32544"/>
    </reaction>
</comment>
<comment type="catalytic activity">
    <reaction evidence="2">
        <text>urate(out) + n chloride(in) = urate(in) + n chloride(out)</text>
        <dbReference type="Rhea" id="RHEA:72319"/>
        <dbReference type="ChEBI" id="CHEBI:17775"/>
        <dbReference type="ChEBI" id="CHEBI:17996"/>
    </reaction>
</comment>
<comment type="catalytic activity">
    <reaction evidence="2">
        <text>orotate(out) + nicotinate(in) = orotate(in) + nicotinate(out)</text>
        <dbReference type="Rhea" id="RHEA:72039"/>
        <dbReference type="ChEBI" id="CHEBI:30839"/>
        <dbReference type="ChEBI" id="CHEBI:32544"/>
    </reaction>
</comment>
<comment type="biophysicochemical properties">
    <kinetics>
        <KM evidence="4">1773 uM for urate</KM>
        <Vmax evidence="4">31.6 pmol/min/mg enzyme for urate transport</Vmax>
    </kinetics>
</comment>
<comment type="subunit">
    <text evidence="2">Interacts with PDZK1.</text>
</comment>
<comment type="subcellular location">
    <subcellularLocation>
        <location evidence="4">Apical cell membrane</location>
        <topology evidence="3">Multi-pass membrane protein</topology>
    </subcellularLocation>
</comment>
<comment type="tissue specificity">
    <text evidence="4">Expressed in the proximal tubular epithelial cells in kidney.</text>
</comment>
<comment type="PTM">
    <text evidence="1">N-glycosylated.</text>
</comment>
<comment type="similarity">
    <text evidence="6">Belongs to the major facilitator (TC 2.A.1) superfamily. Organic cation transporter (TC 2.A.1.19) family.</text>
</comment>
<proteinExistence type="evidence at protein level"/>
<gene>
    <name type="primary">Slc22a12</name>
    <name evidence="5" type="synonym">Urat1</name>
</gene>
<evidence type="ECO:0000250" key="1">
    <source>
        <dbReference type="UniProtKB" id="Q8CFZ5"/>
    </source>
</evidence>
<evidence type="ECO:0000250" key="2">
    <source>
        <dbReference type="UniProtKB" id="Q96S37"/>
    </source>
</evidence>
<evidence type="ECO:0000255" key="3"/>
<evidence type="ECO:0000269" key="4">
    <source>
    </source>
</evidence>
<evidence type="ECO:0000303" key="5">
    <source>
    </source>
</evidence>
<evidence type="ECO:0000305" key="6"/>
<organism>
    <name type="scientific">Rattus norvegicus</name>
    <name type="common">Rat</name>
    <dbReference type="NCBI Taxonomy" id="10116"/>
    <lineage>
        <taxon>Eukaryota</taxon>
        <taxon>Metazoa</taxon>
        <taxon>Chordata</taxon>
        <taxon>Craniata</taxon>
        <taxon>Vertebrata</taxon>
        <taxon>Euteleostomi</taxon>
        <taxon>Mammalia</taxon>
        <taxon>Eutheria</taxon>
        <taxon>Euarchontoglires</taxon>
        <taxon>Glires</taxon>
        <taxon>Rodentia</taxon>
        <taxon>Myomorpha</taxon>
        <taxon>Muroidea</taxon>
        <taxon>Muridae</taxon>
        <taxon>Murinae</taxon>
        <taxon>Rattus</taxon>
    </lineage>
</organism>
<keyword id="KW-0002">3D-structure</keyword>
<keyword id="KW-1003">Cell membrane</keyword>
<keyword id="KW-0325">Glycoprotein</keyword>
<keyword id="KW-0406">Ion transport</keyword>
<keyword id="KW-0472">Membrane</keyword>
<keyword id="KW-0597">Phosphoprotein</keyword>
<keyword id="KW-1185">Reference proteome</keyword>
<keyword id="KW-0812">Transmembrane</keyword>
<keyword id="KW-1133">Transmembrane helix</keyword>
<keyword id="KW-0813">Transport</keyword>
<accession>Q3ZAV1</accession>
<name>S22AC_RAT</name>
<feature type="chain" id="PRO_0000307946" description="Solute carrier family 22 member 12">
    <location>
        <begin position="1"/>
        <end position="553"/>
    </location>
</feature>
<feature type="transmembrane region" description="Helical" evidence="3">
    <location>
        <begin position="16"/>
        <end position="36"/>
    </location>
</feature>
<feature type="transmembrane region" description="Helical" evidence="3">
    <location>
        <begin position="146"/>
        <end position="166"/>
    </location>
</feature>
<feature type="transmembrane region" description="Helical" evidence="3">
    <location>
        <begin position="182"/>
        <end position="202"/>
    </location>
</feature>
<feature type="transmembrane region" description="Helical" evidence="3">
    <location>
        <begin position="204"/>
        <end position="224"/>
    </location>
</feature>
<feature type="transmembrane region" description="Helical" evidence="3">
    <location>
        <begin position="232"/>
        <end position="252"/>
    </location>
</feature>
<feature type="transmembrane region" description="Helical" evidence="3">
    <location>
        <begin position="260"/>
        <end position="280"/>
    </location>
</feature>
<feature type="transmembrane region" description="Helical" evidence="3">
    <location>
        <begin position="351"/>
        <end position="371"/>
    </location>
</feature>
<feature type="transmembrane region" description="Helical" evidence="3">
    <location>
        <begin position="378"/>
        <end position="398"/>
    </location>
</feature>
<feature type="transmembrane region" description="Helical" evidence="3">
    <location>
        <begin position="407"/>
        <end position="427"/>
    </location>
</feature>
<feature type="transmembrane region" description="Helical" evidence="3">
    <location>
        <begin position="435"/>
        <end position="455"/>
    </location>
</feature>
<feature type="transmembrane region" description="Helical" evidence="3">
    <location>
        <begin position="466"/>
        <end position="486"/>
    </location>
</feature>
<feature type="transmembrane region" description="Helical" evidence="3">
    <location>
        <begin position="495"/>
        <end position="515"/>
    </location>
</feature>
<feature type="modified residue" description="Phosphoserine" evidence="1">
    <location>
        <position position="534"/>
    </location>
</feature>
<feature type="glycosylation site" description="N-linked (GlcNAc...) asparagine" evidence="3">
    <location>
        <position position="56"/>
    </location>
</feature>
<feature type="glycosylation site" description="N-linked (GlcNAc...) asparagine" evidence="3">
    <location>
        <position position="102"/>
    </location>
</feature>
<feature type="glycosylation site" description="N-linked (GlcNAc...) asparagine" evidence="3">
    <location>
        <position position="107"/>
    </location>
</feature>
<dbReference type="EMBL" id="BC103638">
    <property type="protein sequence ID" value="AAI03639.1"/>
    <property type="molecule type" value="mRNA"/>
</dbReference>
<dbReference type="RefSeq" id="NP_001030115.1">
    <property type="nucleotide sequence ID" value="NM_001034943.1"/>
</dbReference>
<dbReference type="RefSeq" id="XP_008758383.1">
    <property type="nucleotide sequence ID" value="XM_008760161.2"/>
</dbReference>
<dbReference type="RefSeq" id="XP_008758384.1">
    <property type="nucleotide sequence ID" value="XM_008760162.2"/>
</dbReference>
<dbReference type="PDB" id="9J5W">
    <property type="method" value="EM"/>
    <property type="resolution" value="3.20 A"/>
    <property type="chains" value="A=1-553"/>
</dbReference>
<dbReference type="PDB" id="9J5X">
    <property type="method" value="EM"/>
    <property type="resolution" value="3.44 A"/>
    <property type="chains" value="A=1-553"/>
</dbReference>
<dbReference type="PDB" id="9J5Z">
    <property type="method" value="EM"/>
    <property type="resolution" value="3.50 A"/>
    <property type="chains" value="A=1-553"/>
</dbReference>
<dbReference type="PDBsum" id="9J5W"/>
<dbReference type="PDBsum" id="9J5X"/>
<dbReference type="PDBsum" id="9J5Z"/>
<dbReference type="EMDB" id="EMD-61155"/>
<dbReference type="EMDB" id="EMD-61156"/>
<dbReference type="EMDB" id="EMD-61157"/>
<dbReference type="SMR" id="Q3ZAV1"/>
<dbReference type="FunCoup" id="Q3ZAV1">
    <property type="interactions" value="19"/>
</dbReference>
<dbReference type="STRING" id="10116.ENSRNOP00000028665"/>
<dbReference type="BindingDB" id="Q3ZAV1"/>
<dbReference type="ChEMBL" id="CHEMBL1075239"/>
<dbReference type="GlyCosmos" id="Q3ZAV1">
    <property type="glycosylation" value="3 sites, No reported glycans"/>
</dbReference>
<dbReference type="GlyGen" id="Q3ZAV1">
    <property type="glycosylation" value="3 sites"/>
</dbReference>
<dbReference type="iPTMnet" id="Q3ZAV1"/>
<dbReference type="PhosphoSitePlus" id="Q3ZAV1"/>
<dbReference type="PaxDb" id="10116-ENSRNOP00000028665"/>
<dbReference type="Ensembl" id="ENSRNOT00000092270.2">
    <property type="protein sequence ID" value="ENSRNOP00000075925.1"/>
    <property type="gene ID" value="ENSRNOG00000021108.7"/>
</dbReference>
<dbReference type="GeneID" id="365398"/>
<dbReference type="KEGG" id="rno:365398"/>
<dbReference type="UCSC" id="RGD:621628">
    <property type="organism name" value="rat"/>
</dbReference>
<dbReference type="AGR" id="RGD:621628"/>
<dbReference type="CTD" id="116085"/>
<dbReference type="RGD" id="621628">
    <property type="gene designation" value="Slc22a12"/>
</dbReference>
<dbReference type="eggNOG" id="KOG0255">
    <property type="taxonomic scope" value="Eukaryota"/>
</dbReference>
<dbReference type="GeneTree" id="ENSGT00940000162485"/>
<dbReference type="HOGENOM" id="CLU_001265_33_3_1"/>
<dbReference type="InParanoid" id="Q3ZAV1"/>
<dbReference type="OMA" id="LTWNYLQ"/>
<dbReference type="OrthoDB" id="2544694at2759"/>
<dbReference type="PhylomeDB" id="Q3ZAV1"/>
<dbReference type="TreeFam" id="TF315847"/>
<dbReference type="Reactome" id="R-RNO-561048">
    <property type="pathway name" value="Organic anion transport"/>
</dbReference>
<dbReference type="PRO" id="PR:Q3ZAV1"/>
<dbReference type="Proteomes" id="UP000002494">
    <property type="component" value="Chromosome 1"/>
</dbReference>
<dbReference type="Bgee" id="ENSRNOG00000021108">
    <property type="expression patterns" value="Expressed in adult mammalian kidney and 7 other cell types or tissues"/>
</dbReference>
<dbReference type="ExpressionAtlas" id="Q3ZAV1">
    <property type="expression patterns" value="baseline and differential"/>
</dbReference>
<dbReference type="GO" id="GO:0016324">
    <property type="term" value="C:apical plasma membrane"/>
    <property type="evidence" value="ECO:0000314"/>
    <property type="project" value="UniProtKB"/>
</dbReference>
<dbReference type="GO" id="GO:0031526">
    <property type="term" value="C:brush border membrane"/>
    <property type="evidence" value="ECO:0000250"/>
    <property type="project" value="UniProtKB"/>
</dbReference>
<dbReference type="GO" id="GO:0016020">
    <property type="term" value="C:membrane"/>
    <property type="evidence" value="ECO:0000250"/>
    <property type="project" value="UniProtKB"/>
</dbReference>
<dbReference type="GO" id="GO:0005886">
    <property type="term" value="C:plasma membrane"/>
    <property type="evidence" value="ECO:0000250"/>
    <property type="project" value="UniProtKB"/>
</dbReference>
<dbReference type="GO" id="GO:0030165">
    <property type="term" value="F:PDZ domain binding"/>
    <property type="evidence" value="ECO:0000250"/>
    <property type="project" value="UniProtKB"/>
</dbReference>
<dbReference type="GO" id="GO:0015143">
    <property type="term" value="F:urate transmembrane transporter activity"/>
    <property type="evidence" value="ECO:0000250"/>
    <property type="project" value="UniProtKB"/>
</dbReference>
<dbReference type="GO" id="GO:0032869">
    <property type="term" value="P:cellular response to insulin stimulus"/>
    <property type="evidence" value="ECO:0000270"/>
    <property type="project" value="RGD"/>
</dbReference>
<dbReference type="GO" id="GO:0006811">
    <property type="term" value="P:monoatomic ion transport"/>
    <property type="evidence" value="ECO:0007669"/>
    <property type="project" value="UniProtKB-KW"/>
</dbReference>
<dbReference type="GO" id="GO:0015711">
    <property type="term" value="P:organic anion transport"/>
    <property type="evidence" value="ECO:0000318"/>
    <property type="project" value="GO_Central"/>
</dbReference>
<dbReference type="GO" id="GO:0097744">
    <property type="term" value="P:renal urate salt excretion"/>
    <property type="evidence" value="ECO:0000270"/>
    <property type="project" value="RGD"/>
</dbReference>
<dbReference type="GO" id="GO:0009410">
    <property type="term" value="P:response to xenobiotic stimulus"/>
    <property type="evidence" value="ECO:0000250"/>
    <property type="project" value="UniProtKB"/>
</dbReference>
<dbReference type="GO" id="GO:0046415">
    <property type="term" value="P:urate metabolic process"/>
    <property type="evidence" value="ECO:0000266"/>
    <property type="project" value="RGD"/>
</dbReference>
<dbReference type="GO" id="GO:0015747">
    <property type="term" value="P:urate transport"/>
    <property type="evidence" value="ECO:0000314"/>
    <property type="project" value="UniProtKB"/>
</dbReference>
<dbReference type="CDD" id="cd17374">
    <property type="entry name" value="MFS_OAT"/>
    <property type="match status" value="1"/>
</dbReference>
<dbReference type="FunFam" id="1.20.1250.20:FF:000023">
    <property type="entry name" value="Solute carrier family 22 member 6"/>
    <property type="match status" value="1"/>
</dbReference>
<dbReference type="Gene3D" id="1.20.1250.20">
    <property type="entry name" value="MFS general substrate transporter like domains"/>
    <property type="match status" value="1"/>
</dbReference>
<dbReference type="InterPro" id="IPR020846">
    <property type="entry name" value="MFS_dom"/>
</dbReference>
<dbReference type="InterPro" id="IPR005828">
    <property type="entry name" value="MFS_sugar_transport-like"/>
</dbReference>
<dbReference type="InterPro" id="IPR036259">
    <property type="entry name" value="MFS_trans_sf"/>
</dbReference>
<dbReference type="PANTHER" id="PTHR24064">
    <property type="entry name" value="SOLUTE CARRIER FAMILY 22 MEMBER"/>
    <property type="match status" value="1"/>
</dbReference>
<dbReference type="Pfam" id="PF00083">
    <property type="entry name" value="Sugar_tr"/>
    <property type="match status" value="1"/>
</dbReference>
<dbReference type="SUPFAM" id="SSF103473">
    <property type="entry name" value="MFS general substrate transporter"/>
    <property type="match status" value="1"/>
</dbReference>
<dbReference type="PROSITE" id="PS50850">
    <property type="entry name" value="MFS"/>
    <property type="match status" value="1"/>
</dbReference>